<feature type="chain" id="PRO_1000094444" description="3-dehydroquinate synthase">
    <location>
        <begin position="1"/>
        <end position="366"/>
    </location>
</feature>
<feature type="binding site" evidence="1">
    <location>
        <begin position="71"/>
        <end position="76"/>
    </location>
    <ligand>
        <name>NAD(+)</name>
        <dbReference type="ChEBI" id="CHEBI:57540"/>
    </ligand>
</feature>
<feature type="binding site" evidence="1">
    <location>
        <begin position="105"/>
        <end position="109"/>
    </location>
    <ligand>
        <name>NAD(+)</name>
        <dbReference type="ChEBI" id="CHEBI:57540"/>
    </ligand>
</feature>
<feature type="binding site" evidence="1">
    <location>
        <begin position="129"/>
        <end position="130"/>
    </location>
    <ligand>
        <name>NAD(+)</name>
        <dbReference type="ChEBI" id="CHEBI:57540"/>
    </ligand>
</feature>
<feature type="binding site" evidence="1">
    <location>
        <position position="142"/>
    </location>
    <ligand>
        <name>NAD(+)</name>
        <dbReference type="ChEBI" id="CHEBI:57540"/>
    </ligand>
</feature>
<feature type="binding site" evidence="1">
    <location>
        <position position="151"/>
    </location>
    <ligand>
        <name>NAD(+)</name>
        <dbReference type="ChEBI" id="CHEBI:57540"/>
    </ligand>
</feature>
<feature type="binding site" evidence="1">
    <location>
        <begin position="169"/>
        <end position="172"/>
    </location>
    <ligand>
        <name>NAD(+)</name>
        <dbReference type="ChEBI" id="CHEBI:57540"/>
    </ligand>
</feature>
<feature type="binding site" evidence="1">
    <location>
        <position position="184"/>
    </location>
    <ligand>
        <name>Zn(2+)</name>
        <dbReference type="ChEBI" id="CHEBI:29105"/>
    </ligand>
</feature>
<feature type="binding site" evidence="1">
    <location>
        <position position="247"/>
    </location>
    <ligand>
        <name>Zn(2+)</name>
        <dbReference type="ChEBI" id="CHEBI:29105"/>
    </ligand>
</feature>
<feature type="binding site" evidence="1">
    <location>
        <position position="264"/>
    </location>
    <ligand>
        <name>Zn(2+)</name>
        <dbReference type="ChEBI" id="CHEBI:29105"/>
    </ligand>
</feature>
<name>AROB_ACTP2</name>
<proteinExistence type="inferred from homology"/>
<keyword id="KW-0028">Amino-acid biosynthesis</keyword>
<keyword id="KW-0057">Aromatic amino acid biosynthesis</keyword>
<keyword id="KW-0170">Cobalt</keyword>
<keyword id="KW-0963">Cytoplasm</keyword>
<keyword id="KW-0456">Lyase</keyword>
<keyword id="KW-0479">Metal-binding</keyword>
<keyword id="KW-0520">NAD</keyword>
<keyword id="KW-0547">Nucleotide-binding</keyword>
<keyword id="KW-1185">Reference proteome</keyword>
<keyword id="KW-0862">Zinc</keyword>
<comment type="function">
    <text evidence="1">Catalyzes the conversion of 3-deoxy-D-arabino-heptulosonate 7-phosphate (DAHP) to dehydroquinate (DHQ).</text>
</comment>
<comment type="catalytic activity">
    <reaction evidence="1">
        <text>7-phospho-2-dehydro-3-deoxy-D-arabino-heptonate = 3-dehydroquinate + phosphate</text>
        <dbReference type="Rhea" id="RHEA:21968"/>
        <dbReference type="ChEBI" id="CHEBI:32364"/>
        <dbReference type="ChEBI" id="CHEBI:43474"/>
        <dbReference type="ChEBI" id="CHEBI:58394"/>
        <dbReference type="EC" id="4.2.3.4"/>
    </reaction>
</comment>
<comment type="cofactor">
    <cofactor evidence="1">
        <name>Co(2+)</name>
        <dbReference type="ChEBI" id="CHEBI:48828"/>
    </cofactor>
    <cofactor evidence="1">
        <name>Zn(2+)</name>
        <dbReference type="ChEBI" id="CHEBI:29105"/>
    </cofactor>
    <text evidence="1">Binds 1 divalent metal cation per subunit. Can use either Co(2+) or Zn(2+).</text>
</comment>
<comment type="cofactor">
    <cofactor evidence="1">
        <name>NAD(+)</name>
        <dbReference type="ChEBI" id="CHEBI:57540"/>
    </cofactor>
</comment>
<comment type="pathway">
    <text evidence="1">Metabolic intermediate biosynthesis; chorismate biosynthesis; chorismate from D-erythrose 4-phosphate and phosphoenolpyruvate: step 2/7.</text>
</comment>
<comment type="subcellular location">
    <subcellularLocation>
        <location evidence="1">Cytoplasm</location>
    </subcellularLocation>
</comment>
<comment type="similarity">
    <text evidence="1">Belongs to the sugar phosphate cyclases superfamily. Dehydroquinate synthase family.</text>
</comment>
<accession>A3MYR5</accession>
<reference key="1">
    <citation type="journal article" date="2008" name="J. Bacteriol.">
        <title>The complete genome sequence of Actinobacillus pleuropneumoniae L20 (serotype 5b).</title>
        <authorList>
            <person name="Foote S.J."/>
            <person name="Bosse J.T."/>
            <person name="Bouevitch A.B."/>
            <person name="Langford P.R."/>
            <person name="Young N.M."/>
            <person name="Nash J.H.E."/>
        </authorList>
    </citation>
    <scope>NUCLEOTIDE SEQUENCE [LARGE SCALE GENOMIC DNA]</scope>
    <source>
        <strain>L20</strain>
    </source>
</reference>
<gene>
    <name evidence="1" type="primary">aroB</name>
    <name type="ordered locus">APL_0193</name>
</gene>
<organism>
    <name type="scientific">Actinobacillus pleuropneumoniae serotype 5b (strain L20)</name>
    <dbReference type="NCBI Taxonomy" id="416269"/>
    <lineage>
        <taxon>Bacteria</taxon>
        <taxon>Pseudomonadati</taxon>
        <taxon>Pseudomonadota</taxon>
        <taxon>Gammaproteobacteria</taxon>
        <taxon>Pasteurellales</taxon>
        <taxon>Pasteurellaceae</taxon>
        <taxon>Actinobacillus</taxon>
    </lineage>
</organism>
<evidence type="ECO:0000255" key="1">
    <source>
        <dbReference type="HAMAP-Rule" id="MF_00110"/>
    </source>
</evidence>
<sequence length="366" mass="40043">MLQVNVELKERRYPITIGAGLLGDPNSYSSLKAGDKVMIVSNPTVAAHYLATVTNTLNGLGCSVDSVLIPDGEKYKTLDSLNMIFTALLEKNHNRDTTLIALGGGVIGDVAGYAAASYQRGIRFIQIPTTLLAQVDSSVGGKTAVNHPLGKNMIGAFYQPISVIIDTNTLQTLPKREVSAGLAEVIKYGAIFDIHFFEWLESNIHHLVALKQNELEYCIQRCCQLKADVVARDETEKGDRALLNLGHTFGHAIEAHLGYGNWLHGEAVSVGMLEAAELSRILGDLSAQDVSRLERLLAQAVLPTISPDGMEPSEYLPYMWRDKKVLGGQLRLVLLKSLGKAYVTAQASEQQVLSAIERFTQREFHE</sequence>
<dbReference type="EC" id="4.2.3.4" evidence="1"/>
<dbReference type="EMBL" id="CP000569">
    <property type="protein sequence ID" value="ABN73301.1"/>
    <property type="molecule type" value="Genomic_DNA"/>
</dbReference>
<dbReference type="RefSeq" id="WP_005595959.1">
    <property type="nucleotide sequence ID" value="NC_009053.1"/>
</dbReference>
<dbReference type="SMR" id="A3MYR5"/>
<dbReference type="STRING" id="416269.APL_0193"/>
<dbReference type="EnsemblBacteria" id="ABN73301">
    <property type="protein sequence ID" value="ABN73301"/>
    <property type="gene ID" value="APL_0193"/>
</dbReference>
<dbReference type="GeneID" id="48598340"/>
<dbReference type="KEGG" id="apl:APL_0193"/>
<dbReference type="eggNOG" id="COG0337">
    <property type="taxonomic scope" value="Bacteria"/>
</dbReference>
<dbReference type="HOGENOM" id="CLU_001201_0_2_6"/>
<dbReference type="UniPathway" id="UPA00053">
    <property type="reaction ID" value="UER00085"/>
</dbReference>
<dbReference type="Proteomes" id="UP000001432">
    <property type="component" value="Chromosome"/>
</dbReference>
<dbReference type="GO" id="GO:0005737">
    <property type="term" value="C:cytoplasm"/>
    <property type="evidence" value="ECO:0007669"/>
    <property type="project" value="UniProtKB-SubCell"/>
</dbReference>
<dbReference type="GO" id="GO:0003856">
    <property type="term" value="F:3-dehydroquinate synthase activity"/>
    <property type="evidence" value="ECO:0007669"/>
    <property type="project" value="UniProtKB-UniRule"/>
</dbReference>
<dbReference type="GO" id="GO:0046872">
    <property type="term" value="F:metal ion binding"/>
    <property type="evidence" value="ECO:0007669"/>
    <property type="project" value="UniProtKB-KW"/>
</dbReference>
<dbReference type="GO" id="GO:0000166">
    <property type="term" value="F:nucleotide binding"/>
    <property type="evidence" value="ECO:0007669"/>
    <property type="project" value="UniProtKB-KW"/>
</dbReference>
<dbReference type="GO" id="GO:0008652">
    <property type="term" value="P:amino acid biosynthetic process"/>
    <property type="evidence" value="ECO:0007669"/>
    <property type="project" value="UniProtKB-KW"/>
</dbReference>
<dbReference type="GO" id="GO:0009073">
    <property type="term" value="P:aromatic amino acid family biosynthetic process"/>
    <property type="evidence" value="ECO:0007669"/>
    <property type="project" value="UniProtKB-KW"/>
</dbReference>
<dbReference type="GO" id="GO:0009423">
    <property type="term" value="P:chorismate biosynthetic process"/>
    <property type="evidence" value="ECO:0007669"/>
    <property type="project" value="UniProtKB-UniRule"/>
</dbReference>
<dbReference type="CDD" id="cd08195">
    <property type="entry name" value="DHQS"/>
    <property type="match status" value="1"/>
</dbReference>
<dbReference type="FunFam" id="1.20.1090.10:FF:000002">
    <property type="entry name" value="3-dehydroquinate synthase"/>
    <property type="match status" value="1"/>
</dbReference>
<dbReference type="FunFam" id="3.40.50.1970:FF:000001">
    <property type="entry name" value="3-dehydroquinate synthase"/>
    <property type="match status" value="1"/>
</dbReference>
<dbReference type="Gene3D" id="3.40.50.1970">
    <property type="match status" value="1"/>
</dbReference>
<dbReference type="Gene3D" id="1.20.1090.10">
    <property type="entry name" value="Dehydroquinate synthase-like - alpha domain"/>
    <property type="match status" value="1"/>
</dbReference>
<dbReference type="HAMAP" id="MF_00110">
    <property type="entry name" value="DHQ_synthase"/>
    <property type="match status" value="1"/>
</dbReference>
<dbReference type="InterPro" id="IPR050071">
    <property type="entry name" value="Dehydroquinate_synthase"/>
</dbReference>
<dbReference type="InterPro" id="IPR016037">
    <property type="entry name" value="DHQ_synth_AroB"/>
</dbReference>
<dbReference type="InterPro" id="IPR030963">
    <property type="entry name" value="DHQ_synth_fam"/>
</dbReference>
<dbReference type="InterPro" id="IPR030960">
    <property type="entry name" value="DHQS/DOIS_N"/>
</dbReference>
<dbReference type="InterPro" id="IPR056179">
    <property type="entry name" value="DHQS_C"/>
</dbReference>
<dbReference type="NCBIfam" id="TIGR01357">
    <property type="entry name" value="aroB"/>
    <property type="match status" value="1"/>
</dbReference>
<dbReference type="PANTHER" id="PTHR43622">
    <property type="entry name" value="3-DEHYDROQUINATE SYNTHASE"/>
    <property type="match status" value="1"/>
</dbReference>
<dbReference type="PANTHER" id="PTHR43622:SF7">
    <property type="entry name" value="3-DEHYDROQUINATE SYNTHASE, CHLOROPLASTIC"/>
    <property type="match status" value="1"/>
</dbReference>
<dbReference type="Pfam" id="PF01761">
    <property type="entry name" value="DHQ_synthase"/>
    <property type="match status" value="1"/>
</dbReference>
<dbReference type="Pfam" id="PF24621">
    <property type="entry name" value="DHQS_C"/>
    <property type="match status" value="1"/>
</dbReference>
<dbReference type="PIRSF" id="PIRSF001455">
    <property type="entry name" value="DHQ_synth"/>
    <property type="match status" value="1"/>
</dbReference>
<dbReference type="SUPFAM" id="SSF56796">
    <property type="entry name" value="Dehydroquinate synthase-like"/>
    <property type="match status" value="1"/>
</dbReference>
<protein>
    <recommendedName>
        <fullName evidence="1">3-dehydroquinate synthase</fullName>
        <shortName evidence="1">DHQS</shortName>
        <ecNumber evidence="1">4.2.3.4</ecNumber>
    </recommendedName>
</protein>